<sequence>MKKQHSKISNFIQKIISEDIQNKKITHVKTRFPPEPNGYLHLGHAKSICLNFDLAQEFKGTCNLRFDDTNPKNEDTCYINSIIQDIKWLEYKWHNKIRYASLYFNKIYQYAIKLIKKGLAYVDQLSPEEIRTFRGTLTTSGIDSPYRTQSIEKNLNLFKKMKQGKMLEGTACLRAKIDMASNCITMRDPVLYRIIFSKHHQTNKKWCIYPTYDFTHCISDALEKITHSLCTLEFQDHRKLYEWILKKIDISCNTHQYEFSRLKLEYSVLSKRKLNLLVNNKVVNGWDDPRMPTLSGLRNRGYTPSSIKLFCKKIGITKQENTIQLSFLESCIRSDLNPIAPRYMAVIHPIKIQICNLSDNYEEILNIPNHPTKPNMGCHKSIFSNTLYIDQNDFYENKSELLKKLAIGKEIRLRYSYVIKAHKIKKDQNNNIKTIFCTYDKNTLGKNPKNRKILGVIHWISEKNVLPARFFLYDKLFTIQSPETVKNFLQYINTNSLVIKYGFVEKDILTNISTTAYQFEREGYFCINKNFSITKNLTFNRIVTLKDKIK</sequence>
<proteinExistence type="inferred from homology"/>
<gene>
    <name evidence="1" type="primary">glnS</name>
    <name type="ordered locus">bbp_375</name>
</gene>
<name>SYQ_BUCBP</name>
<comment type="catalytic activity">
    <reaction evidence="1">
        <text>tRNA(Gln) + L-glutamine + ATP = L-glutaminyl-tRNA(Gln) + AMP + diphosphate</text>
        <dbReference type="Rhea" id="RHEA:20121"/>
        <dbReference type="Rhea" id="RHEA-COMP:9662"/>
        <dbReference type="Rhea" id="RHEA-COMP:9681"/>
        <dbReference type="ChEBI" id="CHEBI:30616"/>
        <dbReference type="ChEBI" id="CHEBI:33019"/>
        <dbReference type="ChEBI" id="CHEBI:58359"/>
        <dbReference type="ChEBI" id="CHEBI:78442"/>
        <dbReference type="ChEBI" id="CHEBI:78521"/>
        <dbReference type="ChEBI" id="CHEBI:456215"/>
        <dbReference type="EC" id="6.1.1.18"/>
    </reaction>
</comment>
<comment type="subunit">
    <text evidence="1">Monomer.</text>
</comment>
<comment type="subcellular location">
    <subcellularLocation>
        <location evidence="1">Cytoplasm</location>
    </subcellularLocation>
</comment>
<comment type="similarity">
    <text evidence="1 2">Belongs to the class-I aminoacyl-tRNA synthetase family.</text>
</comment>
<evidence type="ECO:0000255" key="1">
    <source>
        <dbReference type="HAMAP-Rule" id="MF_00126"/>
    </source>
</evidence>
<evidence type="ECO:0000305" key="2"/>
<keyword id="KW-0030">Aminoacyl-tRNA synthetase</keyword>
<keyword id="KW-0067">ATP-binding</keyword>
<keyword id="KW-0963">Cytoplasm</keyword>
<keyword id="KW-0436">Ligase</keyword>
<keyword id="KW-0547">Nucleotide-binding</keyword>
<keyword id="KW-0648">Protein biosynthesis</keyword>
<keyword id="KW-1185">Reference proteome</keyword>
<protein>
    <recommendedName>
        <fullName evidence="1">Glutamine--tRNA ligase</fullName>
        <ecNumber evidence="1">6.1.1.18</ecNumber>
    </recommendedName>
    <alternativeName>
        <fullName evidence="1">Glutaminyl-tRNA synthetase</fullName>
        <shortName evidence="1">GlnRS</shortName>
    </alternativeName>
</protein>
<feature type="chain" id="PRO_0000195829" description="Glutamine--tRNA ligase">
    <location>
        <begin position="1"/>
        <end position="550"/>
    </location>
</feature>
<feature type="short sequence motif" description="'HIGH' region" evidence="1">
    <location>
        <begin position="34"/>
        <end position="44"/>
    </location>
</feature>
<feature type="short sequence motif" description="'KMSKS' region" evidence="1">
    <location>
        <begin position="268"/>
        <end position="272"/>
    </location>
</feature>
<feature type="binding site" evidence="1">
    <location>
        <begin position="35"/>
        <end position="37"/>
    </location>
    <ligand>
        <name>ATP</name>
        <dbReference type="ChEBI" id="CHEBI:30616"/>
    </ligand>
</feature>
<feature type="binding site" evidence="1">
    <location>
        <begin position="41"/>
        <end position="47"/>
    </location>
    <ligand>
        <name>ATP</name>
        <dbReference type="ChEBI" id="CHEBI:30616"/>
    </ligand>
</feature>
<feature type="binding site" evidence="1">
    <location>
        <position position="67"/>
    </location>
    <ligand>
        <name>L-glutamine</name>
        <dbReference type="ChEBI" id="CHEBI:58359"/>
    </ligand>
</feature>
<feature type="binding site" evidence="1">
    <location>
        <position position="212"/>
    </location>
    <ligand>
        <name>L-glutamine</name>
        <dbReference type="ChEBI" id="CHEBI:58359"/>
    </ligand>
</feature>
<feature type="binding site" evidence="1">
    <location>
        <position position="231"/>
    </location>
    <ligand>
        <name>ATP</name>
        <dbReference type="ChEBI" id="CHEBI:30616"/>
    </ligand>
</feature>
<feature type="binding site" evidence="1">
    <location>
        <begin position="261"/>
        <end position="262"/>
    </location>
    <ligand>
        <name>ATP</name>
        <dbReference type="ChEBI" id="CHEBI:30616"/>
    </ligand>
</feature>
<feature type="binding site" evidence="1">
    <location>
        <begin position="269"/>
        <end position="271"/>
    </location>
    <ligand>
        <name>ATP</name>
        <dbReference type="ChEBI" id="CHEBI:30616"/>
    </ligand>
</feature>
<dbReference type="EC" id="6.1.1.18" evidence="1"/>
<dbReference type="EMBL" id="AE016826">
    <property type="protein sequence ID" value="AAO27089.1"/>
    <property type="molecule type" value="Genomic_DNA"/>
</dbReference>
<dbReference type="RefSeq" id="WP_011091490.1">
    <property type="nucleotide sequence ID" value="NC_004545.1"/>
</dbReference>
<dbReference type="SMR" id="Q89AD4"/>
<dbReference type="STRING" id="224915.bbp_375"/>
<dbReference type="KEGG" id="bab:bbp_375"/>
<dbReference type="eggNOG" id="COG0008">
    <property type="taxonomic scope" value="Bacteria"/>
</dbReference>
<dbReference type="HOGENOM" id="CLU_001882_2_3_6"/>
<dbReference type="OrthoDB" id="9801560at2"/>
<dbReference type="Proteomes" id="UP000000601">
    <property type="component" value="Chromosome"/>
</dbReference>
<dbReference type="GO" id="GO:0005829">
    <property type="term" value="C:cytosol"/>
    <property type="evidence" value="ECO:0007669"/>
    <property type="project" value="TreeGrafter"/>
</dbReference>
<dbReference type="GO" id="GO:0005524">
    <property type="term" value="F:ATP binding"/>
    <property type="evidence" value="ECO:0007669"/>
    <property type="project" value="UniProtKB-UniRule"/>
</dbReference>
<dbReference type="GO" id="GO:0004819">
    <property type="term" value="F:glutamine-tRNA ligase activity"/>
    <property type="evidence" value="ECO:0007669"/>
    <property type="project" value="UniProtKB-UniRule"/>
</dbReference>
<dbReference type="GO" id="GO:0006425">
    <property type="term" value="P:glutaminyl-tRNA aminoacylation"/>
    <property type="evidence" value="ECO:0007669"/>
    <property type="project" value="InterPro"/>
</dbReference>
<dbReference type="GO" id="GO:0006424">
    <property type="term" value="P:glutamyl-tRNA aminoacylation"/>
    <property type="evidence" value="ECO:0007669"/>
    <property type="project" value="UniProtKB-UniRule"/>
</dbReference>
<dbReference type="FunFam" id="3.40.50.620:FF:000037">
    <property type="entry name" value="Glutamine--tRNA ligase cytoplasmic"/>
    <property type="match status" value="1"/>
</dbReference>
<dbReference type="Gene3D" id="3.40.50.620">
    <property type="entry name" value="HUPs"/>
    <property type="match status" value="1"/>
</dbReference>
<dbReference type="Gene3D" id="2.40.240.10">
    <property type="entry name" value="Ribosomal Protein L25, Chain P"/>
    <property type="match status" value="2"/>
</dbReference>
<dbReference type="HAMAP" id="MF_00126">
    <property type="entry name" value="Gln_tRNA_synth"/>
    <property type="match status" value="1"/>
</dbReference>
<dbReference type="InterPro" id="IPR001412">
    <property type="entry name" value="aa-tRNA-synth_I_CS"/>
</dbReference>
<dbReference type="InterPro" id="IPR004514">
    <property type="entry name" value="Gln-tRNA-synth"/>
</dbReference>
<dbReference type="InterPro" id="IPR050132">
    <property type="entry name" value="Gln/Glu-tRNA_Ligase"/>
</dbReference>
<dbReference type="InterPro" id="IPR022861">
    <property type="entry name" value="Gln_tRNA_ligase_bac"/>
</dbReference>
<dbReference type="InterPro" id="IPR000924">
    <property type="entry name" value="Glu/Gln-tRNA-synth"/>
</dbReference>
<dbReference type="InterPro" id="IPR020058">
    <property type="entry name" value="Glu/Gln-tRNA-synth_Ib_cat-dom"/>
</dbReference>
<dbReference type="InterPro" id="IPR020059">
    <property type="entry name" value="Glu/Gln-tRNA-synth_Ib_codon-bd"/>
</dbReference>
<dbReference type="InterPro" id="IPR020056">
    <property type="entry name" value="Rbsml_bL25/Gln-tRNA_synth_N"/>
</dbReference>
<dbReference type="InterPro" id="IPR011035">
    <property type="entry name" value="Ribosomal_bL25/Gln-tRNA_synth"/>
</dbReference>
<dbReference type="InterPro" id="IPR014729">
    <property type="entry name" value="Rossmann-like_a/b/a_fold"/>
</dbReference>
<dbReference type="InterPro" id="IPR049437">
    <property type="entry name" value="tRNA-synt_1c_C2"/>
</dbReference>
<dbReference type="NCBIfam" id="TIGR00440">
    <property type="entry name" value="glnS"/>
    <property type="match status" value="1"/>
</dbReference>
<dbReference type="NCBIfam" id="NF011291">
    <property type="entry name" value="PRK14703.1"/>
    <property type="match status" value="1"/>
</dbReference>
<dbReference type="PANTHER" id="PTHR43097:SF5">
    <property type="entry name" value="GLUTAMATE--TRNA LIGASE"/>
    <property type="match status" value="1"/>
</dbReference>
<dbReference type="PANTHER" id="PTHR43097">
    <property type="entry name" value="GLUTAMINE-TRNA LIGASE"/>
    <property type="match status" value="1"/>
</dbReference>
<dbReference type="Pfam" id="PF00749">
    <property type="entry name" value="tRNA-synt_1c"/>
    <property type="match status" value="1"/>
</dbReference>
<dbReference type="Pfam" id="PF03950">
    <property type="entry name" value="tRNA-synt_1c_C"/>
    <property type="match status" value="1"/>
</dbReference>
<dbReference type="Pfam" id="PF20974">
    <property type="entry name" value="tRNA-synt_1c_C2"/>
    <property type="match status" value="1"/>
</dbReference>
<dbReference type="PRINTS" id="PR00987">
    <property type="entry name" value="TRNASYNTHGLU"/>
</dbReference>
<dbReference type="SUPFAM" id="SSF52374">
    <property type="entry name" value="Nucleotidylyl transferase"/>
    <property type="match status" value="1"/>
</dbReference>
<dbReference type="SUPFAM" id="SSF50715">
    <property type="entry name" value="Ribosomal protein L25-like"/>
    <property type="match status" value="1"/>
</dbReference>
<dbReference type="PROSITE" id="PS00178">
    <property type="entry name" value="AA_TRNA_LIGASE_I"/>
    <property type="match status" value="1"/>
</dbReference>
<accession>Q89AD4</accession>
<organism>
    <name type="scientific">Buchnera aphidicola subsp. Baizongia pistaciae (strain Bp)</name>
    <dbReference type="NCBI Taxonomy" id="224915"/>
    <lineage>
        <taxon>Bacteria</taxon>
        <taxon>Pseudomonadati</taxon>
        <taxon>Pseudomonadota</taxon>
        <taxon>Gammaproteobacteria</taxon>
        <taxon>Enterobacterales</taxon>
        <taxon>Erwiniaceae</taxon>
        <taxon>Buchnera</taxon>
    </lineage>
</organism>
<reference key="1">
    <citation type="journal article" date="2003" name="Proc. Natl. Acad. Sci. U.S.A.">
        <title>Reductive genome evolution in Buchnera aphidicola.</title>
        <authorList>
            <person name="van Ham R.C.H.J."/>
            <person name="Kamerbeek J."/>
            <person name="Palacios C."/>
            <person name="Rausell C."/>
            <person name="Abascal F."/>
            <person name="Bastolla U."/>
            <person name="Fernandez J.M."/>
            <person name="Jimenez L."/>
            <person name="Postigo M."/>
            <person name="Silva F.J."/>
            <person name="Tamames J."/>
            <person name="Viguera E."/>
            <person name="Latorre A."/>
            <person name="Valencia A."/>
            <person name="Moran F."/>
            <person name="Moya A."/>
        </authorList>
    </citation>
    <scope>NUCLEOTIDE SEQUENCE [LARGE SCALE GENOMIC DNA]</scope>
    <source>
        <strain>Bp</strain>
    </source>
</reference>